<comment type="function">
    <text evidence="1">Component of the cytochrome b6-f complex, which mediates electron transfer between photosystem II (PSII) and photosystem I (PSI), cyclic electron flow around PSI, and state transitions. PetG is required for either the stability or assembly of the cytochrome b6-f complex.</text>
</comment>
<comment type="subunit">
    <text evidence="1">The 4 large subunits of the cytochrome b6-f complex are cytochrome b6, subunit IV (17 kDa polypeptide, PetD), cytochrome f and the Rieske protein, while the 4 small subunits are PetG, PetL, PetM and PetN. The complex functions as a dimer.</text>
</comment>
<comment type="subcellular location">
    <subcellularLocation>
        <location evidence="1">Cellular thylakoid membrane</location>
        <topology evidence="1">Single-pass membrane protein</topology>
    </subcellularLocation>
</comment>
<comment type="similarity">
    <text evidence="1">Belongs to the PetG family.</text>
</comment>
<comment type="sequence caution" evidence="2">
    <conflict type="erroneous initiation">
        <sequence resource="EMBL-CDS" id="CAE07236"/>
    </conflict>
</comment>
<evidence type="ECO:0000255" key="1">
    <source>
        <dbReference type="HAMAP-Rule" id="MF_00432"/>
    </source>
</evidence>
<evidence type="ECO:0000305" key="2"/>
<accession>Q7U8A1</accession>
<organism>
    <name type="scientific">Parasynechococcus marenigrum (strain WH8102)</name>
    <dbReference type="NCBI Taxonomy" id="84588"/>
    <lineage>
        <taxon>Bacteria</taxon>
        <taxon>Bacillati</taxon>
        <taxon>Cyanobacteriota</taxon>
        <taxon>Cyanophyceae</taxon>
        <taxon>Synechococcales</taxon>
        <taxon>Prochlorococcaceae</taxon>
        <taxon>Parasynechococcus</taxon>
        <taxon>Parasynechococcus marenigrum</taxon>
    </lineage>
</organism>
<feature type="chain" id="PRO_0000216417" description="Cytochrome b6-f complex subunit 5">
    <location>
        <begin position="1"/>
        <end position="38"/>
    </location>
</feature>
<feature type="transmembrane region" description="Helical" evidence="1">
    <location>
        <begin position="5"/>
        <end position="25"/>
    </location>
</feature>
<reference key="1">
    <citation type="journal article" date="2003" name="Nature">
        <title>The genome of a motile marine Synechococcus.</title>
        <authorList>
            <person name="Palenik B."/>
            <person name="Brahamsha B."/>
            <person name="Larimer F.W."/>
            <person name="Land M.L."/>
            <person name="Hauser L."/>
            <person name="Chain P."/>
            <person name="Lamerdin J.E."/>
            <person name="Regala W."/>
            <person name="Allen E.E."/>
            <person name="McCarren J."/>
            <person name="Paulsen I.T."/>
            <person name="Dufresne A."/>
            <person name="Partensky F."/>
            <person name="Webb E.A."/>
            <person name="Waterbury J."/>
        </authorList>
    </citation>
    <scope>NUCLEOTIDE SEQUENCE [LARGE SCALE GENOMIC DNA]</scope>
    <source>
        <strain>WH8102</strain>
    </source>
</reference>
<proteinExistence type="inferred from homology"/>
<dbReference type="EMBL" id="BX569691">
    <property type="protein sequence ID" value="CAE07236.1"/>
    <property type="status" value="ALT_INIT"/>
    <property type="molecule type" value="Genomic_DNA"/>
</dbReference>
<dbReference type="RefSeq" id="WP_009790260.1">
    <property type="nucleotide sequence ID" value="NC_005070.1"/>
</dbReference>
<dbReference type="SMR" id="Q7U8A1"/>
<dbReference type="STRING" id="84588.SYNW0721"/>
<dbReference type="KEGG" id="syw:SYNW0721"/>
<dbReference type="eggNOG" id="ENOG5033BE9">
    <property type="taxonomic scope" value="Bacteria"/>
</dbReference>
<dbReference type="HOGENOM" id="CLU_216962_0_0_3"/>
<dbReference type="BioCyc" id="MetaCyc:TX72_RS13115-MONOMER"/>
<dbReference type="Proteomes" id="UP000001422">
    <property type="component" value="Chromosome"/>
</dbReference>
<dbReference type="GO" id="GO:0009512">
    <property type="term" value="C:cytochrome b6f complex"/>
    <property type="evidence" value="ECO:0007669"/>
    <property type="project" value="InterPro"/>
</dbReference>
<dbReference type="GO" id="GO:0031676">
    <property type="term" value="C:plasma membrane-derived thylakoid membrane"/>
    <property type="evidence" value="ECO:0007669"/>
    <property type="project" value="UniProtKB-SubCell"/>
</dbReference>
<dbReference type="GO" id="GO:0045158">
    <property type="term" value="F:electron transporter, transferring electrons within cytochrome b6/f complex of photosystem II activity"/>
    <property type="evidence" value="ECO:0007669"/>
    <property type="project" value="UniProtKB-UniRule"/>
</dbReference>
<dbReference type="GO" id="GO:0017004">
    <property type="term" value="P:cytochrome complex assembly"/>
    <property type="evidence" value="ECO:0007669"/>
    <property type="project" value="UniProtKB-UniRule"/>
</dbReference>
<dbReference type="GO" id="GO:0015979">
    <property type="term" value="P:photosynthesis"/>
    <property type="evidence" value="ECO:0007669"/>
    <property type="project" value="UniProtKB-KW"/>
</dbReference>
<dbReference type="HAMAP" id="MF_00432">
    <property type="entry name" value="Cytb6_f_PetG"/>
    <property type="match status" value="1"/>
</dbReference>
<dbReference type="InterPro" id="IPR003683">
    <property type="entry name" value="Cyt_6/f_cplx_su5"/>
</dbReference>
<dbReference type="InterPro" id="IPR036099">
    <property type="entry name" value="Cyt_6/f_cplx_su5_sf"/>
</dbReference>
<dbReference type="NCBIfam" id="NF001907">
    <property type="entry name" value="PRK00665.1"/>
    <property type="match status" value="1"/>
</dbReference>
<dbReference type="Pfam" id="PF02529">
    <property type="entry name" value="PetG"/>
    <property type="match status" value="1"/>
</dbReference>
<dbReference type="PIRSF" id="PIRSF000034">
    <property type="entry name" value="Cyt_b6-f_V"/>
    <property type="match status" value="1"/>
</dbReference>
<dbReference type="SUPFAM" id="SSF103446">
    <property type="entry name" value="PetG subunit of the cytochrome b6f complex"/>
    <property type="match status" value="1"/>
</dbReference>
<gene>
    <name evidence="1" type="primary">petG</name>
    <name type="ordered locus">SYNW0721</name>
</gene>
<protein>
    <recommendedName>
        <fullName evidence="1">Cytochrome b6-f complex subunit 5</fullName>
    </recommendedName>
    <alternativeName>
        <fullName evidence="1">Cytochrome b6-f complex subunit PetG</fullName>
    </alternativeName>
    <alternativeName>
        <fullName evidence="1">Cytochrome b6-f complex subunit V</fullName>
    </alternativeName>
</protein>
<keyword id="KW-0249">Electron transport</keyword>
<keyword id="KW-0472">Membrane</keyword>
<keyword id="KW-0602">Photosynthesis</keyword>
<keyword id="KW-0793">Thylakoid</keyword>
<keyword id="KW-0812">Transmembrane</keyword>
<keyword id="KW-1133">Transmembrane helix</keyword>
<keyword id="KW-0813">Transport</keyword>
<sequence>MIEPLLCGIVLGLIPVTLLGLFVAAWNQYRRGGSALGG</sequence>
<name>PETG_PARMW</name>